<accession>Q9FGF6</accession>
<feature type="signal peptide" evidence="3">
    <location>
        <begin position="1"/>
        <end position="26"/>
    </location>
</feature>
<feature type="propeptide" id="PRO_0000401457" evidence="1">
    <location>
        <begin position="27"/>
        <end position="65"/>
    </location>
</feature>
<feature type="peptide" id="PRO_0000401458" description="GLV2p">
    <location>
        <begin position="66"/>
        <end position="78"/>
    </location>
</feature>
<feature type="region of interest" description="Disordered" evidence="4">
    <location>
        <begin position="49"/>
        <end position="79"/>
    </location>
</feature>
<feature type="modified residue" description="Sulfotyrosine" evidence="7">
    <location>
        <position position="67"/>
    </location>
</feature>
<feature type="modified residue" description="Hydroxyproline" evidence="7">
    <location>
        <position position="75"/>
    </location>
</feature>
<organism>
    <name type="scientific">Arabidopsis thaliana</name>
    <name type="common">Mouse-ear cress</name>
    <dbReference type="NCBI Taxonomy" id="3702"/>
    <lineage>
        <taxon>Eukaryota</taxon>
        <taxon>Viridiplantae</taxon>
        <taxon>Streptophyta</taxon>
        <taxon>Embryophyta</taxon>
        <taxon>Tracheophyta</taxon>
        <taxon>Spermatophyta</taxon>
        <taxon>Magnoliopsida</taxon>
        <taxon>eudicotyledons</taxon>
        <taxon>Gunneridae</taxon>
        <taxon>Pentapetalae</taxon>
        <taxon>rosids</taxon>
        <taxon>malvids</taxon>
        <taxon>Brassicales</taxon>
        <taxon>Brassicaceae</taxon>
        <taxon>Camelineae</taxon>
        <taxon>Arabidopsis</taxon>
    </lineage>
</organism>
<protein>
    <recommendedName>
        <fullName evidence="12">Protein GOLVEN 2</fullName>
    </recommendedName>
    <alternativeName>
        <fullName evidence="10">CLAVATA3/ESR (CLE)-related protein CLEL9</fullName>
        <shortName evidence="10">CLE-Like protein 9</shortName>
    </alternativeName>
    <alternativeName>
        <fullName evidence="9">Root meristem growth factor 9</fullName>
        <shortName evidence="9">AtRGF9</shortName>
    </alternativeName>
    <component>
        <recommendedName>
            <fullName evidence="11">GLV2p</fullName>
        </recommendedName>
    </component>
</protein>
<dbReference type="EMBL" id="AB025637">
    <property type="protein sequence ID" value="BAB10310.1"/>
    <property type="molecule type" value="Genomic_DNA"/>
</dbReference>
<dbReference type="EMBL" id="CP002688">
    <property type="protein sequence ID" value="AED97949.1"/>
    <property type="molecule type" value="Genomic_DNA"/>
</dbReference>
<dbReference type="EMBL" id="BT002516">
    <property type="protein sequence ID" value="AAO00876.1"/>
    <property type="molecule type" value="mRNA"/>
</dbReference>
<dbReference type="EMBL" id="BT006500">
    <property type="protein sequence ID" value="AAP21308.1"/>
    <property type="molecule type" value="mRNA"/>
</dbReference>
<dbReference type="RefSeq" id="NP_201282.1">
    <property type="nucleotide sequence ID" value="NM_125873.3"/>
</dbReference>
<dbReference type="STRING" id="3702.Q9FGF6"/>
<dbReference type="PaxDb" id="3702-AT5G64770.1"/>
<dbReference type="EnsemblPlants" id="AT5G64770.1">
    <property type="protein sequence ID" value="AT5G64770.1"/>
    <property type="gene ID" value="AT5G64770"/>
</dbReference>
<dbReference type="GeneID" id="836598"/>
<dbReference type="Gramene" id="AT5G64770.1">
    <property type="protein sequence ID" value="AT5G64770.1"/>
    <property type="gene ID" value="AT5G64770"/>
</dbReference>
<dbReference type="KEGG" id="ath:AT5G64770"/>
<dbReference type="Araport" id="AT5G64770"/>
<dbReference type="TAIR" id="AT5G64770">
    <property type="gene designation" value="RGF9"/>
</dbReference>
<dbReference type="HOGENOM" id="CLU_174364_0_0_1"/>
<dbReference type="InParanoid" id="Q9FGF6"/>
<dbReference type="OMA" id="RNIGGIM"/>
<dbReference type="OrthoDB" id="1083733at2759"/>
<dbReference type="PhylomeDB" id="Q9FGF6"/>
<dbReference type="PRO" id="PR:Q9FGF6"/>
<dbReference type="Proteomes" id="UP000006548">
    <property type="component" value="Chromosome 5"/>
</dbReference>
<dbReference type="ExpressionAtlas" id="Q9FGF6">
    <property type="expression patterns" value="baseline and differential"/>
</dbReference>
<dbReference type="GO" id="GO:0005783">
    <property type="term" value="C:endoplasmic reticulum"/>
    <property type="evidence" value="ECO:0007669"/>
    <property type="project" value="UniProtKB-SubCell"/>
</dbReference>
<dbReference type="GO" id="GO:0005615">
    <property type="term" value="C:extracellular space"/>
    <property type="evidence" value="ECO:0000250"/>
    <property type="project" value="UniProtKB"/>
</dbReference>
<dbReference type="GO" id="GO:0008083">
    <property type="term" value="F:growth factor activity"/>
    <property type="evidence" value="ECO:0000314"/>
    <property type="project" value="UniProtKB"/>
</dbReference>
<dbReference type="GO" id="GO:0005179">
    <property type="term" value="F:hormone activity"/>
    <property type="evidence" value="ECO:0000314"/>
    <property type="project" value="UniProtKB"/>
</dbReference>
<dbReference type="GO" id="GO:0030154">
    <property type="term" value="P:cell differentiation"/>
    <property type="evidence" value="ECO:0000314"/>
    <property type="project" value="UniProtKB"/>
</dbReference>
<dbReference type="GO" id="GO:0048527">
    <property type="term" value="P:lateral root development"/>
    <property type="evidence" value="ECO:0000315"/>
    <property type="project" value="TAIR"/>
</dbReference>
<dbReference type="GO" id="GO:0009958">
    <property type="term" value="P:positive gravitropism"/>
    <property type="evidence" value="ECO:0000315"/>
    <property type="project" value="TAIR"/>
</dbReference>
<dbReference type="GO" id="GO:0008284">
    <property type="term" value="P:positive regulation of cell population proliferation"/>
    <property type="evidence" value="ECO:0000314"/>
    <property type="project" value="UniProtKB"/>
</dbReference>
<dbReference type="GO" id="GO:0009786">
    <property type="term" value="P:regulation of asymmetric cell division"/>
    <property type="evidence" value="ECO:0000250"/>
    <property type="project" value="UniProtKB"/>
</dbReference>
<dbReference type="GO" id="GO:2000012">
    <property type="term" value="P:regulation of auxin polar transport"/>
    <property type="evidence" value="ECO:0000315"/>
    <property type="project" value="TAIR"/>
</dbReference>
<dbReference type="GO" id="GO:2000023">
    <property type="term" value="P:regulation of lateral root development"/>
    <property type="evidence" value="ECO:0000314"/>
    <property type="project" value="UniProtKB"/>
</dbReference>
<dbReference type="GO" id="GO:0032880">
    <property type="term" value="P:regulation of protein localization"/>
    <property type="evidence" value="ECO:0000314"/>
    <property type="project" value="TAIR"/>
</dbReference>
<dbReference type="GO" id="GO:2000280">
    <property type="term" value="P:regulation of root development"/>
    <property type="evidence" value="ECO:0000315"/>
    <property type="project" value="UniProtKB"/>
</dbReference>
<dbReference type="GO" id="GO:0010082">
    <property type="term" value="P:regulation of root meristem growth"/>
    <property type="evidence" value="ECO:0000314"/>
    <property type="project" value="UniProtKB"/>
</dbReference>
<dbReference type="GO" id="GO:2000067">
    <property type="term" value="P:regulation of root morphogenesis"/>
    <property type="evidence" value="ECO:0000314"/>
    <property type="project" value="UniProtKB"/>
</dbReference>
<dbReference type="GO" id="GO:0009733">
    <property type="term" value="P:response to auxin"/>
    <property type="evidence" value="ECO:0000270"/>
    <property type="project" value="UniProtKB"/>
</dbReference>
<dbReference type="GO" id="GO:0022622">
    <property type="term" value="P:root system development"/>
    <property type="evidence" value="ECO:0000315"/>
    <property type="project" value="TAIR"/>
</dbReference>
<dbReference type="InterPro" id="IPR049306">
    <property type="entry name" value="GLV1-2"/>
</dbReference>
<dbReference type="Pfam" id="PF21529">
    <property type="entry name" value="GLV1-2"/>
    <property type="match status" value="1"/>
</dbReference>
<keyword id="KW-0221">Differentiation</keyword>
<keyword id="KW-0256">Endoplasmic reticulum</keyword>
<keyword id="KW-0339">Growth factor</keyword>
<keyword id="KW-0379">Hydroxylation</keyword>
<keyword id="KW-1185">Reference proteome</keyword>
<keyword id="KW-0964">Secreted</keyword>
<keyword id="KW-0732">Signal</keyword>
<keyword id="KW-0765">Sulfation</keyword>
<name>GLV2_ARATH</name>
<evidence type="ECO:0000250" key="1">
    <source>
        <dbReference type="UniProtKB" id="Q3E880"/>
    </source>
</evidence>
<evidence type="ECO:0000250" key="2">
    <source>
        <dbReference type="UniProtKB" id="Q9LI64"/>
    </source>
</evidence>
<evidence type="ECO:0000255" key="3"/>
<evidence type="ECO:0000256" key="4">
    <source>
        <dbReference type="SAM" id="MobiDB-lite"/>
    </source>
</evidence>
<evidence type="ECO:0000269" key="5">
    <source>
    </source>
</evidence>
<evidence type="ECO:0000269" key="6">
    <source>
    </source>
</evidence>
<evidence type="ECO:0000269" key="7">
    <source>
    </source>
</evidence>
<evidence type="ECO:0000269" key="8">
    <source>
    </source>
</evidence>
<evidence type="ECO:0000303" key="9">
    <source>
    </source>
</evidence>
<evidence type="ECO:0000303" key="10">
    <source>
    </source>
</evidence>
<evidence type="ECO:0000303" key="11">
    <source>
    </source>
</evidence>
<evidence type="ECO:0000303" key="12">
    <source>
    </source>
</evidence>
<evidence type="ECO:0000305" key="13"/>
<evidence type="ECO:0000305" key="14">
    <source>
    </source>
</evidence>
<evidence type="ECO:0000305" key="15">
    <source>
    </source>
</evidence>
<evidence type="ECO:0000312" key="16">
    <source>
        <dbReference type="Araport" id="AT5G64770"/>
    </source>
</evidence>
<evidence type="ECO:0000312" key="17">
    <source>
        <dbReference type="EMBL" id="BAB10310.1"/>
    </source>
</evidence>
<gene>
    <name evidence="12" type="primary">GLV2</name>
    <name evidence="10" type="synonym">CLEL9</name>
    <name evidence="9" type="synonym">RGF9</name>
    <name evidence="16" type="ordered locus">At5g64770</name>
    <name evidence="17" type="ORF">MVP7.10</name>
</gene>
<reference key="1">
    <citation type="submission" date="1999-04" db="EMBL/GenBank/DDBJ databases">
        <title>Structural analysis of Arabidopsis thaliana chromosome 5. XI.</title>
        <authorList>
            <person name="Kaneko T."/>
            <person name="Katoh T."/>
            <person name="Asamizu E."/>
            <person name="Sato S."/>
            <person name="Nakamura Y."/>
            <person name="Kotani H."/>
            <person name="Tabata S."/>
        </authorList>
    </citation>
    <scope>NUCLEOTIDE SEQUENCE [LARGE SCALE GENOMIC DNA]</scope>
    <source>
        <strain>cv. Columbia</strain>
    </source>
</reference>
<reference key="2">
    <citation type="journal article" date="2017" name="Plant J.">
        <title>Araport11: a complete reannotation of the Arabidopsis thaliana reference genome.</title>
        <authorList>
            <person name="Cheng C.Y."/>
            <person name="Krishnakumar V."/>
            <person name="Chan A.P."/>
            <person name="Thibaud-Nissen F."/>
            <person name="Schobel S."/>
            <person name="Town C.D."/>
        </authorList>
    </citation>
    <scope>GENOME REANNOTATION</scope>
    <source>
        <strain>cv. Columbia</strain>
    </source>
</reference>
<reference key="3">
    <citation type="journal article" date="2003" name="Science">
        <title>Empirical analysis of transcriptional activity in the Arabidopsis genome.</title>
        <authorList>
            <person name="Yamada K."/>
            <person name="Lim J."/>
            <person name="Dale J.M."/>
            <person name="Chen H."/>
            <person name="Shinn P."/>
            <person name="Palm C.J."/>
            <person name="Southwick A.M."/>
            <person name="Wu H.C."/>
            <person name="Kim C.J."/>
            <person name="Nguyen M."/>
            <person name="Pham P.K."/>
            <person name="Cheuk R.F."/>
            <person name="Karlin-Newmann G."/>
            <person name="Liu S.X."/>
            <person name="Lam B."/>
            <person name="Sakano H."/>
            <person name="Wu T."/>
            <person name="Yu G."/>
            <person name="Miranda M."/>
            <person name="Quach H.L."/>
            <person name="Tripp M."/>
            <person name="Chang C.H."/>
            <person name="Lee J.M."/>
            <person name="Toriumi M.J."/>
            <person name="Chan M.M."/>
            <person name="Tang C.C."/>
            <person name="Onodera C.S."/>
            <person name="Deng J.M."/>
            <person name="Akiyama K."/>
            <person name="Ansari Y."/>
            <person name="Arakawa T."/>
            <person name="Banh J."/>
            <person name="Banno F."/>
            <person name="Bowser L."/>
            <person name="Brooks S.Y."/>
            <person name="Carninci P."/>
            <person name="Chao Q."/>
            <person name="Choy N."/>
            <person name="Enju A."/>
            <person name="Goldsmith A.D."/>
            <person name="Gurjal M."/>
            <person name="Hansen N.F."/>
            <person name="Hayashizaki Y."/>
            <person name="Johnson-Hopson C."/>
            <person name="Hsuan V.W."/>
            <person name="Iida K."/>
            <person name="Karnes M."/>
            <person name="Khan S."/>
            <person name="Koesema E."/>
            <person name="Ishida J."/>
            <person name="Jiang P.X."/>
            <person name="Jones T."/>
            <person name="Kawai J."/>
            <person name="Kamiya A."/>
            <person name="Meyers C."/>
            <person name="Nakajima M."/>
            <person name="Narusaka M."/>
            <person name="Seki M."/>
            <person name="Sakurai T."/>
            <person name="Satou M."/>
            <person name="Tamse R."/>
            <person name="Vaysberg M."/>
            <person name="Wallender E.K."/>
            <person name="Wong C."/>
            <person name="Yamamura Y."/>
            <person name="Yuan S."/>
            <person name="Shinozaki K."/>
            <person name="Davis R.W."/>
            <person name="Theologis A."/>
            <person name="Ecker J.R."/>
        </authorList>
    </citation>
    <scope>NUCLEOTIDE SEQUENCE [LARGE SCALE MRNA]</scope>
    <source>
        <strain>cv. Columbia</strain>
    </source>
</reference>
<reference key="4">
    <citation type="journal article" date="2010" name="Science">
        <title>Secreted peptide signals required for maintenance of root stem cell niche in Arabidopsis.</title>
        <authorList>
            <person name="Matsuzaki Y."/>
            <person name="Ogawa-Ohnishi M."/>
            <person name="Mori A."/>
            <person name="Matsubayashi Y."/>
        </authorList>
    </citation>
    <scope>FUNCTION</scope>
    <scope>GENE FAMILY</scope>
    <scope>NOMENCLATURE</scope>
</reference>
<reference key="5">
    <citation type="journal article" date="2012" name="Dev. Cell">
        <title>GOLVEN secretory peptides regulate auxin carrier turnover during plant gravitropic responses.</title>
        <authorList>
            <person name="Whitford R."/>
            <person name="Fernandez A."/>
            <person name="Tejos R."/>
            <person name="Perez A.C."/>
            <person name="Kleine-Vehn J."/>
            <person name="Vanneste S."/>
            <person name="Drozdzecki A."/>
            <person name="Leitner J."/>
            <person name="Abas L."/>
            <person name="Aerts M."/>
            <person name="Hoogewijs K."/>
            <person name="Baster P."/>
            <person name="De Groodt R."/>
            <person name="Lin Y.-C."/>
            <person name="Storme V."/>
            <person name="Van de Peer Y."/>
            <person name="Beeckman T."/>
            <person name="Madder A."/>
            <person name="Devreese B."/>
            <person name="Luschnig C."/>
            <person name="Friml J."/>
            <person name="Hilson P."/>
        </authorList>
    </citation>
    <scope>FUNCTION</scope>
    <scope>DISRUPTION PHENOTYPE</scope>
    <scope>TISSUE SPECIFICITY</scope>
    <scope>DEVELOPMENTAL STAGE</scope>
    <scope>IDENTIFICATION BY MASS SPECTROMETRY</scope>
    <scope>HYDROXYLATION AT PRO-75</scope>
    <scope>SULFATION AT TYR-67</scope>
    <scope>INDUCTION BY AUXIN</scope>
</reference>
<reference key="6">
    <citation type="journal article" date="2012" name="Proc. Natl. Acad. Sci. U.S.A.">
        <title>CLE-like (CLEL) peptides control the pattern of root growth and lateral root development in Arabidopsis.</title>
        <authorList>
            <person name="Meng L."/>
            <person name="Buchanan B.B."/>
            <person name="Feldman L.J."/>
            <person name="Luan S."/>
        </authorList>
    </citation>
    <scope>FUNCTION</scope>
    <scope>TISSUE SPECIFICITY</scope>
    <scope>SUBCELLULAR LOCATION</scope>
    <scope>NOMENCLATURE</scope>
    <scope>GENE FAMILY</scope>
    <source>
        <strain>cv. Columbia</strain>
    </source>
</reference>
<reference key="7">
    <citation type="journal article" date="2013" name="Plant Physiol.">
        <title>Transcriptional and functional classification of the GOLVEN/ROOT GROWTH FACTOR/CLE-like signaling peptides reveals their role in lateral root and hair formation.</title>
        <authorList>
            <person name="Fernandez A."/>
            <person name="Drozdzecki A."/>
            <person name="Hoogewijs K."/>
            <person name="Nguyen A."/>
            <person name="Beeckman T."/>
            <person name="Madder A."/>
            <person name="Hilson P."/>
        </authorList>
    </citation>
    <scope>FUNCTION</scope>
    <scope>TISSUE SPECIFICITY</scope>
    <scope>DEVELOPMENTAL STAGE</scope>
    <source>
        <strain>cv. Columbia</strain>
    </source>
</reference>
<sequence>MAIRVSHKSFLVALLLILFISSPTQARSLREVVRNRTLLVVEKSQESRKIRHEGGGSDVDGLMDMDYNSANKKRPIHNR</sequence>
<comment type="function">
    <molecule>GLV2p</molecule>
    <text evidence="5 6 7 8">Signaling peptide (root growth factor) that regulates the pattern of root growth and lateral root development by modulating the length and the number of cortical cells in the root apical meristem (RAM), and the anticlinal asymmetric cell divisions in lateral root initiation cells (PubMed:22307643, PubMed:23370719). Also involved in the regulation of hypocotyl bending and root gravitropism, probably by influencing the formation of auxin gradients (PubMed:22421050). Maintains the postembryonic root stem cell niche (PubMed:20798316).</text>
</comment>
<comment type="subunit">
    <molecule>GLV2p</molecule>
    <text evidence="2">Binds to LRR receptor-like serine/threonine-protein kinases to trigger their dimerization with SERK proteins and subsequent signaling.</text>
</comment>
<comment type="subcellular location">
    <molecule>GLV2p</molecule>
    <subcellularLocation>
        <location evidence="14">Secreted</location>
    </subcellularLocation>
</comment>
<comment type="subcellular location">
    <subcellularLocation>
        <location evidence="6">Endoplasmic reticulum</location>
    </subcellularLocation>
    <text evidence="6">The precursor is detected in the endoplasmic reticulum probably during its processing.</text>
</comment>
<comment type="tissue specificity">
    <text evidence="6 7 8">Expressed in siliques, stems, hypocotyls, shoot apex, leaves, flowers and cotyledons, and, to a lower extent, in roots.</text>
</comment>
<comment type="developmental stage">
    <text evidence="7 8">Absent from the primary root (PubMed:23370719). Induced during lateral root formation after the emergence of the primordium and in mature lateral roots (PubMed:23370719). Expressed homogeneously across the cotyledon (PubMed:23370719). In leaves, expressed in the whole lamina, with a stronger signal in the outer part of the leaf (PubMed:23370719). Higher levels in younger leaves and fades out as leaves expand (PubMed:23370719). Observed in the stem and sepals, and in the gynoecium of the developing flowers, and later in siliques (PubMed:23370719). During seedling gravitropic response, restricted to the epidermis and cortex and enhanced at the lower side of the reoriented hypocotyl (PubMed:22421050).</text>
</comment>
<comment type="induction">
    <text evidence="7">Rapidly induced by auxin.</text>
</comment>
<comment type="disruption phenotype">
    <text evidence="7">Reduced hypocotyl bending and dose-dependent altered root gravitropism with an impaired formation of auxin gradients, thus leading to an irregular waves root shape.</text>
</comment>
<comment type="miscellaneous">
    <text evidence="15">'Golven' means irregular waves in Dutch.</text>
</comment>
<comment type="similarity">
    <text evidence="13">Belongs to the RGF family.</text>
</comment>
<proteinExistence type="evidence at protein level"/>